<comment type="function">
    <text evidence="2">May suppress the RNA sensing activity of RIGI in a GTP-dependent.</text>
</comment>
<comment type="subunit">
    <text evidence="2">Interacts with RIGI; this interaction is GTP-dependent and induced upon viral infection; this interaction suppresses the RNA sensing activity of RIGI.</text>
</comment>
<comment type="interaction">
    <interactant intactId="EBI-10186132">
        <id>Q0P5N6</id>
    </interactant>
    <interactant intactId="EBI-7121510">
        <id>P49418</id>
        <label>AMPH</label>
    </interactant>
    <organismsDiffer>false</organismsDiffer>
    <experiments>7</experiments>
</comment>
<comment type="interaction">
    <interactant intactId="EBI-10186132">
        <id>Q0P5N6</id>
    </interactant>
    <interactant intactId="EBI-21535880">
        <id>Q92870-2</id>
        <label>APBB2</label>
    </interactant>
    <organismsDiffer>false</organismsDiffer>
    <experiments>3</experiments>
</comment>
<comment type="interaction">
    <interactant intactId="EBI-10186132">
        <id>Q0P5N6</id>
    </interactant>
    <interactant intactId="EBI-77613">
        <id>P05067</id>
        <label>APP</label>
    </interactant>
    <organismsDiffer>false</organismsDiffer>
    <experiments>3</experiments>
</comment>
<comment type="interaction">
    <interactant intactId="EBI-10186132">
        <id>Q0P5N6</id>
    </interactant>
    <interactant intactId="EBI-17264467">
        <id>P05067-2</id>
        <label>APP</label>
    </interactant>
    <organismsDiffer>false</organismsDiffer>
    <experiments>3</experiments>
</comment>
<comment type="interaction">
    <interactant intactId="EBI-10186132">
        <id>Q0P5N6</id>
    </interactant>
    <interactant intactId="EBI-930964">
        <id>P54253</id>
        <label>ATXN1</label>
    </interactant>
    <organismsDiffer>false</organismsDiffer>
    <experiments>6</experiments>
</comment>
<comment type="interaction">
    <interactant intactId="EBI-10186132">
        <id>Q0P5N6</id>
    </interactant>
    <interactant intactId="EBI-748597">
        <id>Q05D60</id>
        <label>DEUP1</label>
    </interactant>
    <organismsDiffer>false</organismsDiffer>
    <experiments>3</experiments>
</comment>
<comment type="interaction">
    <interactant intactId="EBI-10186132">
        <id>Q0P5N6</id>
    </interactant>
    <interactant intactId="EBI-12143817">
        <id>Q49A26-4</id>
        <label>GLYR1</label>
    </interactant>
    <organismsDiffer>false</organismsDiffer>
    <experiments>3</experiments>
</comment>
<comment type="interaction">
    <interactant intactId="EBI-10186132">
        <id>Q0P5N6</id>
    </interactant>
    <interactant intactId="EBI-618309">
        <id>Q08379</id>
        <label>GOLGA2</label>
    </interactant>
    <organismsDiffer>false</organismsDiffer>
    <experiments>7</experiments>
</comment>
<comment type="interaction">
    <interactant intactId="EBI-10186132">
        <id>Q0P5N6</id>
    </interactant>
    <interactant intactId="EBI-466029">
        <id>P42858</id>
        <label>HTT</label>
    </interactant>
    <organismsDiffer>false</organismsDiffer>
    <experiments>18</experiments>
</comment>
<comment type="interaction">
    <interactant intactId="EBI-10186132">
        <id>Q0P5N6</id>
    </interactant>
    <interactant intactId="EBI-748974">
        <id>Q96CV9</id>
        <label>OPTN</label>
    </interactant>
    <organismsDiffer>false</organismsDiffer>
    <experiments>3</experiments>
</comment>
<comment type="interaction">
    <interactant intactId="EBI-10186132">
        <id>Q0P5N6</id>
    </interactant>
    <interactant intactId="EBI-712685">
        <id>O43924</id>
        <label>PDE6D</label>
    </interactant>
    <organismsDiffer>false</organismsDiffer>
    <experiments>13</experiments>
</comment>
<comment type="interaction">
    <interactant intactId="EBI-10186132">
        <id>Q0P5N6</id>
    </interactant>
    <interactant intactId="EBI-752057">
        <id>Q7Z412</id>
        <label>PEX26</label>
    </interactant>
    <organismsDiffer>false</organismsDiffer>
    <experiments>3</experiments>
</comment>
<comment type="interaction">
    <interactant intactId="EBI-10186132">
        <id>Q0P5N6</id>
    </interactant>
    <interactant intactId="EBI-50433196">
        <id>A0A6Q8PF08</id>
        <label>PMP22</label>
    </interactant>
    <organismsDiffer>false</organismsDiffer>
    <experiments>3</experiments>
</comment>
<comment type="interaction">
    <interactant intactId="EBI-10186132">
        <id>Q0P5N6</id>
    </interactant>
    <interactant intactId="EBI-21251460">
        <id>O60260-5</id>
        <label>PRKN</label>
    </interactant>
    <organismsDiffer>false</organismsDiffer>
    <experiments>6</experiments>
</comment>
<comment type="interaction">
    <interactant intactId="EBI-10186132">
        <id>Q0P5N6</id>
    </interactant>
    <interactant intactId="EBI-2010251">
        <id>P49810</id>
        <label>PSEN2</label>
    </interactant>
    <organismsDiffer>false</organismsDiffer>
    <experiments>3</experiments>
</comment>
<comment type="interaction">
    <interactant intactId="EBI-10186132">
        <id>Q0P5N6</id>
    </interactant>
    <interactant intactId="EBI-10829018">
        <id>Q04864-2</id>
        <label>REL</label>
    </interactant>
    <organismsDiffer>false</organismsDiffer>
    <experiments>3</experiments>
</comment>
<comment type="interaction">
    <interactant intactId="EBI-10186132">
        <id>Q0P5N6</id>
    </interactant>
    <interactant intactId="EBI-985879">
        <id>P37840</id>
        <label>SNCA</label>
    </interactant>
    <organismsDiffer>false</organismsDiffer>
    <experiments>3</experiments>
</comment>
<comment type="interaction">
    <interactant intactId="EBI-10186132">
        <id>Q0P5N6</id>
    </interactant>
    <interactant intactId="EBI-990792">
        <id>P00441</id>
        <label>SOD1</label>
    </interactant>
    <organismsDiffer>false</organismsDiffer>
    <experiments>3</experiments>
</comment>
<comment type="interaction">
    <interactant intactId="EBI-10186132">
        <id>Q0P5N6</id>
    </interactant>
    <interactant intactId="EBI-372899">
        <id>Q13148</id>
        <label>TARDBP</label>
    </interactant>
    <organismsDiffer>false</organismsDiffer>
    <experiments>6</experiments>
</comment>
<comment type="interaction">
    <interactant intactId="EBI-10186132">
        <id>Q0P5N6</id>
    </interactant>
    <interactant intactId="EBI-11952764">
        <id>Q99081-3</id>
        <label>TCF12</label>
    </interactant>
    <organismsDiffer>false</organismsDiffer>
    <experiments>3</experiments>
</comment>
<comment type="interaction">
    <interactant intactId="EBI-10186132">
        <id>Q0P5N6</id>
    </interactant>
    <interactant intactId="EBI-13636688">
        <id>P15884-3</id>
        <label>TCF4</label>
    </interactant>
    <organismsDiffer>false</organismsDiffer>
    <experiments>3</experiments>
</comment>
<comment type="interaction">
    <interactant intactId="EBI-10186132">
        <id>Q0P5N6</id>
    </interactant>
    <interactant intactId="EBI-1188298">
        <id>O95292</id>
        <label>VAPB</label>
    </interactant>
    <organismsDiffer>false</organismsDiffer>
    <experiments>3</experiments>
</comment>
<comment type="subcellular location">
    <subcellularLocation>
        <location evidence="2">Cytoplasm</location>
    </subcellularLocation>
</comment>
<comment type="similarity">
    <text evidence="3">Belongs to the small GTPase superfamily. Arf family.</text>
</comment>
<gene>
    <name evidence="4" type="primary">ARL16</name>
</gene>
<protein>
    <recommendedName>
        <fullName evidence="3">ADP-ribosylation factor-like protein 16</fullName>
    </recommendedName>
</protein>
<proteinExistence type="evidence at protein level"/>
<evidence type="ECO:0000250" key="1"/>
<evidence type="ECO:0000269" key="2">
    <source>
    </source>
</evidence>
<evidence type="ECO:0000305" key="3"/>
<evidence type="ECO:0000312" key="4">
    <source>
        <dbReference type="HGNC" id="HGNC:27902"/>
    </source>
</evidence>
<name>ARL16_HUMAN</name>
<reference key="1">
    <citation type="journal article" date="2004" name="Genome Res.">
        <title>The status, quality, and expansion of the NIH full-length cDNA project: the Mammalian Gene Collection (MGC).</title>
        <authorList>
            <consortium name="The MGC Project Team"/>
        </authorList>
    </citation>
    <scope>NUCLEOTIDE SEQUENCE [LARGE SCALE MRNA]</scope>
    <source>
        <tissue>Brain</tissue>
    </source>
</reference>
<reference key="2">
    <citation type="journal article" date="2011" name="J. Biol. Chem.">
        <title>ARF-like protein 16 (ARL16) inhibits RIG-I by binding with its C-terminal domain in a GTP-dependent manner.</title>
        <authorList>
            <person name="Yang Y.K."/>
            <person name="Qu H."/>
            <person name="Gao D."/>
            <person name="Di W."/>
            <person name="Chen H.W."/>
            <person name="Guo X."/>
            <person name="Zhai Z.H."/>
            <person name="Chen D.Y."/>
        </authorList>
    </citation>
    <scope>SUBCELLULAR LOCATION</scope>
    <scope>FUNCTION</scope>
    <scope>INTERACTION WITH RIGI</scope>
    <scope>MUTAGENESIS OF THR-37</scope>
</reference>
<accession>Q0P5N6</accession>
<organism>
    <name type="scientific">Homo sapiens</name>
    <name type="common">Human</name>
    <dbReference type="NCBI Taxonomy" id="9606"/>
    <lineage>
        <taxon>Eukaryota</taxon>
        <taxon>Metazoa</taxon>
        <taxon>Chordata</taxon>
        <taxon>Craniata</taxon>
        <taxon>Vertebrata</taxon>
        <taxon>Euteleostomi</taxon>
        <taxon>Mammalia</taxon>
        <taxon>Eutheria</taxon>
        <taxon>Euarchontoglires</taxon>
        <taxon>Primates</taxon>
        <taxon>Haplorrhini</taxon>
        <taxon>Catarrhini</taxon>
        <taxon>Hominidae</taxon>
        <taxon>Homo</taxon>
    </lineage>
</organism>
<feature type="chain" id="PRO_0000264630" description="ADP-ribosylation factor-like protein 16">
    <location>
        <begin position="1"/>
        <end position="197"/>
    </location>
</feature>
<feature type="binding site" evidence="1">
    <location>
        <begin position="30"/>
        <end position="37"/>
    </location>
    <ligand>
        <name>GTP</name>
        <dbReference type="ChEBI" id="CHEBI:37565"/>
    </ligand>
</feature>
<feature type="binding site" evidence="1">
    <location>
        <begin position="82"/>
        <end position="86"/>
    </location>
    <ligand>
        <name>GTP</name>
        <dbReference type="ChEBI" id="CHEBI:37565"/>
    </ligand>
</feature>
<feature type="binding site" evidence="1">
    <location>
        <begin position="139"/>
        <end position="142"/>
    </location>
    <ligand>
        <name>GTP</name>
        <dbReference type="ChEBI" id="CHEBI:37565"/>
    </ligand>
</feature>
<feature type="sequence variant" id="VAR_059129" description="In dbSNP:rs8066889.">
    <original>S</original>
    <variation>R</variation>
    <location>
        <position position="10"/>
    </location>
</feature>
<feature type="mutagenesis site" description="Loss of the inhibition of RIGI-mediated antiviral response activity. Loss of GTP binding activity. Loss of interaction with RIGI." evidence="2">
    <original>T</original>
    <variation>N</variation>
    <location>
        <position position="37"/>
    </location>
</feature>
<sequence>MRVAGGRALSRGAELRVPGGAKHGMCLLLGATGVGKTLLVKRLQEVSSRDGKGDLGEPPPTRPTVGTNLTDIVAQRKITIRELGGCMGPIWSSYYGNCRSLLFVMDASDPTQLSASCVQLLGLLSAEQLAEASVLILFNKIDLPCYMSTEEMKSLIRLPDIIACAKQNITTAEISAREGTGLAGVLAWLQATHRAND</sequence>
<dbReference type="EMBL" id="BC105078">
    <property type="protein sequence ID" value="AAI05079.1"/>
    <property type="molecule type" value="mRNA"/>
</dbReference>
<dbReference type="EMBL" id="BC105076">
    <property type="protein sequence ID" value="AAI05077.1"/>
    <property type="molecule type" value="mRNA"/>
</dbReference>
<dbReference type="RefSeq" id="NP_001035114.1">
    <property type="nucleotide sequence ID" value="NM_001040025.2"/>
</dbReference>
<dbReference type="RefSeq" id="NP_001316537.1">
    <property type="nucleotide sequence ID" value="NM_001329608.1"/>
</dbReference>
<dbReference type="SMR" id="Q0P5N6"/>
<dbReference type="BioGRID" id="130847">
    <property type="interactions" value="82"/>
</dbReference>
<dbReference type="FunCoup" id="Q0P5N6">
    <property type="interactions" value="816"/>
</dbReference>
<dbReference type="IntAct" id="Q0P5N6">
    <property type="interactions" value="29"/>
</dbReference>
<dbReference type="MINT" id="Q0P5N6"/>
<dbReference type="STRING" id="9606.ENSP00000380635"/>
<dbReference type="iPTMnet" id="Q0P5N6"/>
<dbReference type="PhosphoSitePlus" id="Q0P5N6"/>
<dbReference type="BioMuta" id="ARL16"/>
<dbReference type="DMDM" id="119361248"/>
<dbReference type="jPOST" id="Q0P5N6"/>
<dbReference type="MassIVE" id="Q0P5N6"/>
<dbReference type="PaxDb" id="9606-ENSP00000380635"/>
<dbReference type="ProteomicsDB" id="58764"/>
<dbReference type="Pumba" id="Q0P5N6"/>
<dbReference type="DNASU" id="339231"/>
<dbReference type="GeneID" id="339231"/>
<dbReference type="KEGG" id="hsa:339231"/>
<dbReference type="UCSC" id="uc002kbf.4">
    <property type="organism name" value="human"/>
</dbReference>
<dbReference type="AGR" id="HGNC:27902"/>
<dbReference type="CTD" id="339231"/>
<dbReference type="DisGeNET" id="339231"/>
<dbReference type="GeneCards" id="ARL16"/>
<dbReference type="HGNC" id="HGNC:27902">
    <property type="gene designation" value="ARL16"/>
</dbReference>
<dbReference type="MIM" id="619117">
    <property type="type" value="gene"/>
</dbReference>
<dbReference type="neXtProt" id="NX_Q0P5N6"/>
<dbReference type="PharmGKB" id="PA142672583"/>
<dbReference type="VEuPathDB" id="HostDB:ENSG00000214087"/>
<dbReference type="eggNOG" id="KOG0072">
    <property type="taxonomic scope" value="Eukaryota"/>
</dbReference>
<dbReference type="InParanoid" id="Q0P5N6"/>
<dbReference type="OMA" id="ETTFSMP"/>
<dbReference type="OrthoDB" id="365445at2759"/>
<dbReference type="PAN-GO" id="Q0P5N6">
    <property type="GO annotations" value="0 GO annotations based on evolutionary models"/>
</dbReference>
<dbReference type="PhylomeDB" id="Q0P5N6"/>
<dbReference type="TreeFam" id="TF323823"/>
<dbReference type="PathwayCommons" id="Q0P5N6"/>
<dbReference type="SignaLink" id="Q0P5N6"/>
<dbReference type="BioGRID-ORCS" id="339231">
    <property type="hits" value="13 hits in 1156 CRISPR screens"/>
</dbReference>
<dbReference type="ChiTaRS" id="ARL16">
    <property type="organism name" value="human"/>
</dbReference>
<dbReference type="GenomeRNAi" id="339231"/>
<dbReference type="Pharos" id="Q0P5N6">
    <property type="development level" value="Tdark"/>
</dbReference>
<dbReference type="PRO" id="PR:Q0P5N6"/>
<dbReference type="Proteomes" id="UP000005640">
    <property type="component" value="Chromosome 17"/>
</dbReference>
<dbReference type="RNAct" id="Q0P5N6">
    <property type="molecule type" value="protein"/>
</dbReference>
<dbReference type="GO" id="GO:0005737">
    <property type="term" value="C:cytoplasm"/>
    <property type="evidence" value="ECO:0000314"/>
    <property type="project" value="UniProtKB"/>
</dbReference>
<dbReference type="GO" id="GO:0005525">
    <property type="term" value="F:GTP binding"/>
    <property type="evidence" value="ECO:0007669"/>
    <property type="project" value="UniProtKB-KW"/>
</dbReference>
<dbReference type="GO" id="GO:0003924">
    <property type="term" value="F:GTPase activity"/>
    <property type="evidence" value="ECO:0007669"/>
    <property type="project" value="InterPro"/>
</dbReference>
<dbReference type="CDD" id="cd00878">
    <property type="entry name" value="Arf_Arl"/>
    <property type="match status" value="1"/>
</dbReference>
<dbReference type="Gene3D" id="3.40.50.300">
    <property type="entry name" value="P-loop containing nucleotide triphosphate hydrolases"/>
    <property type="match status" value="1"/>
</dbReference>
<dbReference type="InterPro" id="IPR027417">
    <property type="entry name" value="P-loop_NTPase"/>
</dbReference>
<dbReference type="InterPro" id="IPR006689">
    <property type="entry name" value="Small_GTPase_ARF/SAR"/>
</dbReference>
<dbReference type="PANTHER" id="PTHR46688">
    <property type="entry name" value="ADP-RIBOSYLATION FACTOR-LIKE PROTEIN 16"/>
    <property type="match status" value="1"/>
</dbReference>
<dbReference type="PANTHER" id="PTHR46688:SF1">
    <property type="entry name" value="ADP-RIBOSYLATION FACTOR-LIKE PROTEIN 16"/>
    <property type="match status" value="1"/>
</dbReference>
<dbReference type="Pfam" id="PF00025">
    <property type="entry name" value="Arf"/>
    <property type="match status" value="1"/>
</dbReference>
<dbReference type="SMART" id="SM00177">
    <property type="entry name" value="ARF"/>
    <property type="match status" value="1"/>
</dbReference>
<dbReference type="SMART" id="SM00178">
    <property type="entry name" value="SAR"/>
    <property type="match status" value="1"/>
</dbReference>
<dbReference type="SUPFAM" id="SSF52540">
    <property type="entry name" value="P-loop containing nucleoside triphosphate hydrolases"/>
    <property type="match status" value="1"/>
</dbReference>
<dbReference type="PROSITE" id="PS51417">
    <property type="entry name" value="ARF"/>
    <property type="match status" value="1"/>
</dbReference>
<keyword id="KW-0963">Cytoplasm</keyword>
<keyword id="KW-0342">GTP-binding</keyword>
<keyword id="KW-0547">Nucleotide-binding</keyword>
<keyword id="KW-1267">Proteomics identification</keyword>
<keyword id="KW-1185">Reference proteome</keyword>